<accession>A6Q3S5</accession>
<sequence>MQYLVVSFSHKNTDIVTREKLALSDDNKREDVATTLLQNPVINEAIILSTCNRIEIILSVKDPFSATEAVLKKLSEVSGINYEELEGRADIYEDNGAIHHVFSVASGLDSLVVGETQITGQIKDAYKEAYEKGWCGQKLGRVMHYAFKCSKEVRSSTDITRSPVSVASAAVSMAKEKLGNLGGMSALVVGAGEMGRLAAKHLISHGCNVILVGRDLEKTKTVAQEIDPDIRVEHVSNLQKLINSYRLLFSATSSKNPVITKDMVKEQSFDRYWFDMAVPRDIEEIYVARIHYFAVDDLKEIVNKNMAFREEQARNAYKIVGHHVNEFFKWLQTLEIDPIIKEIRKRAKDSALAELQKAIKKGYIPKEYEKSIEKLLHNAFNRFLHDPTKQLKAIADEPRADTIVEAIKFFFEIEEEVGLNRYKCEYYMNLRS</sequence>
<gene>
    <name evidence="1" type="primary">hemA</name>
    <name type="ordered locus">NIS_1024</name>
</gene>
<evidence type="ECO:0000255" key="1">
    <source>
        <dbReference type="HAMAP-Rule" id="MF_00087"/>
    </source>
</evidence>
<organism>
    <name type="scientific">Nitratiruptor sp. (strain SB155-2)</name>
    <dbReference type="NCBI Taxonomy" id="387092"/>
    <lineage>
        <taxon>Bacteria</taxon>
        <taxon>Pseudomonadati</taxon>
        <taxon>Campylobacterota</taxon>
        <taxon>Epsilonproteobacteria</taxon>
        <taxon>Nautiliales</taxon>
        <taxon>Nitratiruptoraceae</taxon>
        <taxon>Nitratiruptor</taxon>
    </lineage>
</organism>
<name>HEM1_NITSB</name>
<reference key="1">
    <citation type="journal article" date="2007" name="Proc. Natl. Acad. Sci. U.S.A.">
        <title>Deep-sea vent epsilon-proteobacterial genomes provide insights into emergence of pathogens.</title>
        <authorList>
            <person name="Nakagawa S."/>
            <person name="Takaki Y."/>
            <person name="Shimamura S."/>
            <person name="Reysenbach A.-L."/>
            <person name="Takai K."/>
            <person name="Horikoshi K."/>
        </authorList>
    </citation>
    <scope>NUCLEOTIDE SEQUENCE [LARGE SCALE GENOMIC DNA]</scope>
    <source>
        <strain>SB155-2</strain>
    </source>
</reference>
<keyword id="KW-0521">NADP</keyword>
<keyword id="KW-0560">Oxidoreductase</keyword>
<keyword id="KW-0627">Porphyrin biosynthesis</keyword>
<keyword id="KW-1185">Reference proteome</keyword>
<protein>
    <recommendedName>
        <fullName evidence="1">Glutamyl-tRNA reductase</fullName>
        <shortName evidence="1">GluTR</shortName>
        <ecNumber evidence="1">1.2.1.70</ecNumber>
    </recommendedName>
</protein>
<feature type="chain" id="PRO_1000057577" description="Glutamyl-tRNA reductase">
    <location>
        <begin position="1"/>
        <end position="432"/>
    </location>
</feature>
<feature type="active site" description="Nucleophile" evidence="1">
    <location>
        <position position="51"/>
    </location>
</feature>
<feature type="binding site" evidence="1">
    <location>
        <begin position="50"/>
        <end position="53"/>
    </location>
    <ligand>
        <name>substrate</name>
    </ligand>
</feature>
<feature type="binding site" evidence="1">
    <location>
        <position position="110"/>
    </location>
    <ligand>
        <name>substrate</name>
    </ligand>
</feature>
<feature type="binding site" evidence="1">
    <location>
        <begin position="115"/>
        <end position="117"/>
    </location>
    <ligand>
        <name>substrate</name>
    </ligand>
</feature>
<feature type="binding site" evidence="1">
    <location>
        <position position="121"/>
    </location>
    <ligand>
        <name>substrate</name>
    </ligand>
</feature>
<feature type="binding site" evidence="1">
    <location>
        <begin position="190"/>
        <end position="195"/>
    </location>
    <ligand>
        <name>NADP(+)</name>
        <dbReference type="ChEBI" id="CHEBI:58349"/>
    </ligand>
</feature>
<feature type="site" description="Important for activity" evidence="1">
    <location>
        <position position="100"/>
    </location>
</feature>
<dbReference type="EC" id="1.2.1.70" evidence="1"/>
<dbReference type="EMBL" id="AP009178">
    <property type="protein sequence ID" value="BAF70134.1"/>
    <property type="molecule type" value="Genomic_DNA"/>
</dbReference>
<dbReference type="RefSeq" id="WP_012082397.1">
    <property type="nucleotide sequence ID" value="NC_009662.1"/>
</dbReference>
<dbReference type="SMR" id="A6Q3S5"/>
<dbReference type="FunCoup" id="A6Q3S5">
    <property type="interactions" value="323"/>
</dbReference>
<dbReference type="STRING" id="387092.NIS_1024"/>
<dbReference type="KEGG" id="nis:NIS_1024"/>
<dbReference type="eggNOG" id="COG0373">
    <property type="taxonomic scope" value="Bacteria"/>
</dbReference>
<dbReference type="HOGENOM" id="CLU_035113_2_2_7"/>
<dbReference type="InParanoid" id="A6Q3S5"/>
<dbReference type="OrthoDB" id="110209at2"/>
<dbReference type="UniPathway" id="UPA00251">
    <property type="reaction ID" value="UER00316"/>
</dbReference>
<dbReference type="Proteomes" id="UP000001118">
    <property type="component" value="Chromosome"/>
</dbReference>
<dbReference type="GO" id="GO:0008883">
    <property type="term" value="F:glutamyl-tRNA reductase activity"/>
    <property type="evidence" value="ECO:0007669"/>
    <property type="project" value="UniProtKB-UniRule"/>
</dbReference>
<dbReference type="GO" id="GO:0050661">
    <property type="term" value="F:NADP binding"/>
    <property type="evidence" value="ECO:0007669"/>
    <property type="project" value="InterPro"/>
</dbReference>
<dbReference type="GO" id="GO:0019353">
    <property type="term" value="P:protoporphyrinogen IX biosynthetic process from glutamate"/>
    <property type="evidence" value="ECO:0007669"/>
    <property type="project" value="TreeGrafter"/>
</dbReference>
<dbReference type="CDD" id="cd05213">
    <property type="entry name" value="NAD_bind_Glutamyl_tRNA_reduct"/>
    <property type="match status" value="1"/>
</dbReference>
<dbReference type="FunFam" id="3.30.460.30:FF:000001">
    <property type="entry name" value="Glutamyl-tRNA reductase"/>
    <property type="match status" value="1"/>
</dbReference>
<dbReference type="Gene3D" id="3.30.460.30">
    <property type="entry name" value="Glutamyl-tRNA reductase, N-terminal domain"/>
    <property type="match status" value="1"/>
</dbReference>
<dbReference type="Gene3D" id="3.40.50.720">
    <property type="entry name" value="NAD(P)-binding Rossmann-like Domain"/>
    <property type="match status" value="1"/>
</dbReference>
<dbReference type="HAMAP" id="MF_00087">
    <property type="entry name" value="Glu_tRNA_reductase"/>
    <property type="match status" value="1"/>
</dbReference>
<dbReference type="InterPro" id="IPR000343">
    <property type="entry name" value="4pyrrol_synth_GluRdtase"/>
</dbReference>
<dbReference type="InterPro" id="IPR015896">
    <property type="entry name" value="4pyrrol_synth_GluRdtase_dimer"/>
</dbReference>
<dbReference type="InterPro" id="IPR015895">
    <property type="entry name" value="4pyrrol_synth_GluRdtase_N"/>
</dbReference>
<dbReference type="InterPro" id="IPR018214">
    <property type="entry name" value="GluRdtase_CS"/>
</dbReference>
<dbReference type="InterPro" id="IPR036453">
    <property type="entry name" value="GluRdtase_dimer_dom_sf"/>
</dbReference>
<dbReference type="InterPro" id="IPR036343">
    <property type="entry name" value="GluRdtase_N_sf"/>
</dbReference>
<dbReference type="InterPro" id="IPR036291">
    <property type="entry name" value="NAD(P)-bd_dom_sf"/>
</dbReference>
<dbReference type="InterPro" id="IPR006151">
    <property type="entry name" value="Shikm_DH/Glu-tRNA_Rdtase"/>
</dbReference>
<dbReference type="NCBIfam" id="TIGR01035">
    <property type="entry name" value="hemA"/>
    <property type="match status" value="1"/>
</dbReference>
<dbReference type="PANTHER" id="PTHR43013">
    <property type="entry name" value="GLUTAMYL-TRNA REDUCTASE"/>
    <property type="match status" value="1"/>
</dbReference>
<dbReference type="PANTHER" id="PTHR43013:SF1">
    <property type="entry name" value="GLUTAMYL-TRNA REDUCTASE"/>
    <property type="match status" value="1"/>
</dbReference>
<dbReference type="Pfam" id="PF00745">
    <property type="entry name" value="GlutR_dimer"/>
    <property type="match status" value="1"/>
</dbReference>
<dbReference type="Pfam" id="PF05201">
    <property type="entry name" value="GlutR_N"/>
    <property type="match status" value="1"/>
</dbReference>
<dbReference type="Pfam" id="PF01488">
    <property type="entry name" value="Shikimate_DH"/>
    <property type="match status" value="1"/>
</dbReference>
<dbReference type="PIRSF" id="PIRSF000445">
    <property type="entry name" value="4pyrrol_synth_GluRdtase"/>
    <property type="match status" value="1"/>
</dbReference>
<dbReference type="SUPFAM" id="SSF69742">
    <property type="entry name" value="Glutamyl tRNA-reductase catalytic, N-terminal domain"/>
    <property type="match status" value="1"/>
</dbReference>
<dbReference type="SUPFAM" id="SSF69075">
    <property type="entry name" value="Glutamyl tRNA-reductase dimerization domain"/>
    <property type="match status" value="1"/>
</dbReference>
<dbReference type="SUPFAM" id="SSF51735">
    <property type="entry name" value="NAD(P)-binding Rossmann-fold domains"/>
    <property type="match status" value="1"/>
</dbReference>
<dbReference type="PROSITE" id="PS00747">
    <property type="entry name" value="GLUTR"/>
    <property type="match status" value="1"/>
</dbReference>
<proteinExistence type="inferred from homology"/>
<comment type="function">
    <text evidence="1">Catalyzes the NADPH-dependent reduction of glutamyl-tRNA(Glu) to glutamate 1-semialdehyde (GSA).</text>
</comment>
<comment type="catalytic activity">
    <reaction evidence="1">
        <text>(S)-4-amino-5-oxopentanoate + tRNA(Glu) + NADP(+) = L-glutamyl-tRNA(Glu) + NADPH + H(+)</text>
        <dbReference type="Rhea" id="RHEA:12344"/>
        <dbReference type="Rhea" id="RHEA-COMP:9663"/>
        <dbReference type="Rhea" id="RHEA-COMP:9680"/>
        <dbReference type="ChEBI" id="CHEBI:15378"/>
        <dbReference type="ChEBI" id="CHEBI:57501"/>
        <dbReference type="ChEBI" id="CHEBI:57783"/>
        <dbReference type="ChEBI" id="CHEBI:58349"/>
        <dbReference type="ChEBI" id="CHEBI:78442"/>
        <dbReference type="ChEBI" id="CHEBI:78520"/>
        <dbReference type="EC" id="1.2.1.70"/>
    </reaction>
</comment>
<comment type="pathway">
    <text evidence="1">Porphyrin-containing compound metabolism; protoporphyrin-IX biosynthesis; 5-aminolevulinate from L-glutamyl-tRNA(Glu): step 1/2.</text>
</comment>
<comment type="subunit">
    <text evidence="1">Homodimer.</text>
</comment>
<comment type="domain">
    <text evidence="1">Possesses an unusual extended V-shaped dimeric structure with each monomer consisting of three distinct domains arranged along a curved 'spinal' alpha-helix. The N-terminal catalytic domain specifically recognizes the glutamate moiety of the substrate. The second domain is the NADPH-binding domain, and the third C-terminal domain is responsible for dimerization.</text>
</comment>
<comment type="miscellaneous">
    <text evidence="1">During catalysis, the active site Cys acts as a nucleophile attacking the alpha-carbonyl group of tRNA-bound glutamate with the formation of a thioester intermediate between enzyme and glutamate, and the concomitant release of tRNA(Glu). The thioester intermediate is finally reduced by direct hydride transfer from NADPH, to form the product GSA.</text>
</comment>
<comment type="similarity">
    <text evidence="1">Belongs to the glutamyl-tRNA reductase family.</text>
</comment>